<comment type="function">
    <text>Involved in the biosynthesis of bilin.</text>
</comment>
<dbReference type="EMBL" id="M95288">
    <property type="protein sequence ID" value="AAA27337.1"/>
    <property type="molecule type" value="Genomic_DNA"/>
</dbReference>
<dbReference type="SMR" id="Q02174"/>
<dbReference type="STRING" id="32052.WB44_13675"/>
<dbReference type="GO" id="GO:0030089">
    <property type="term" value="C:phycobilisome"/>
    <property type="evidence" value="ECO:0007669"/>
    <property type="project" value="UniProtKB-KW"/>
</dbReference>
<dbReference type="Gene3D" id="1.25.10.10">
    <property type="entry name" value="Leucine-rich Repeat Variant"/>
    <property type="match status" value="1"/>
</dbReference>
<dbReference type="InterPro" id="IPR011989">
    <property type="entry name" value="ARM-like"/>
</dbReference>
<dbReference type="InterPro" id="IPR016024">
    <property type="entry name" value="ARM-type_fold"/>
</dbReference>
<dbReference type="SUPFAM" id="SSF48371">
    <property type="entry name" value="ARM repeat"/>
    <property type="match status" value="1"/>
</dbReference>
<organism>
    <name type="scientific">Synechococcus sp. (strain WH8020)</name>
    <dbReference type="NCBI Taxonomy" id="32052"/>
    <lineage>
        <taxon>Bacteria</taxon>
        <taxon>Bacillati</taxon>
        <taxon>Cyanobacteriota</taxon>
        <taxon>Cyanophyceae</taxon>
        <taxon>Synechococcales</taxon>
        <taxon>Synechococcaceae</taxon>
        <taxon>Synechococcus</taxon>
    </lineage>
</organism>
<sequence length="419" mass="47401">MKSATEQDSESDFYTAAAHLINCPGIETEQTLIEFLQYRESSCQSIKITKRKIVEVLARLGCIDAVPAIGKCLWSDDVYLVENSVWALQILQCQDQIFIDQMIDILRVDTTNQRISIQCLATLNISRSVDVIRPFQESSVPGIKGAAISGIAKLTRNFTRVPEISLNLLLPNQMDRHFAIQDLIDVDAIDQLNEIFAAPVSPVLKMRAVREMYGENSASVVDLNLLSSLDSLFSCDLSAINCVHEYDESPSSEFLVRDLYNTDFSRCYLALKYLSSRSASEIFPMLKESWVEEAHNDYGAHYCFICLFGSIFDWSAESKRWIFEVLLSSISNLRPQFQKSRAASILALAKLNPSMLCELIPEILSSRDSMPWDMRYSLIQSIDNYAELEIALKNKMIFQLSDNDIDQFVQARARMALAS</sequence>
<keyword id="KW-0042">Antenna complex</keyword>
<keyword id="KW-0605">Phycobilisome</keyword>
<accession>Q02174</accession>
<reference key="1">
    <citation type="journal article" date="1993" name="Plant Mol. Biol.">
        <title>Genes of the R-phycocyanin II locus of marine Synechococcus spp., and comparison of protein-chromophore interactions in phycocyanins differing in bilin composition.</title>
        <authorList>
            <person name="de Lorimier R."/>
            <person name="Wilbanks S.M."/>
            <person name="Glazer A.N."/>
        </authorList>
    </citation>
    <scope>NUCLEOTIDE SEQUENCE [GENOMIC DNA]</scope>
</reference>
<reference key="2">
    <citation type="journal article" date="1993" name="J. Biol. Chem.">
        <title>Rod structure of a phycoerythrin II-containing phycobilisome. I. Organization and sequence of the gene cluster encoding the major phycobiliprotein rod components in the genome of marine Synechococcus sp. WH8020.</title>
        <authorList>
            <person name="Wilbanks S.M."/>
            <person name="Glazer A.N."/>
        </authorList>
    </citation>
    <scope>NUCLEOTIDE SEQUENCE [GENOMIC DNA]</scope>
</reference>
<protein>
    <recommendedName>
        <fullName>Bilin biosynthesis protein CpeY</fullName>
    </recommendedName>
</protein>
<gene>
    <name type="primary">cpeY</name>
</gene>
<name>CPEY_SYNPY</name>
<proteinExistence type="predicted"/>
<feature type="chain" id="PRO_0000199290" description="Bilin biosynthesis protein CpeY">
    <location>
        <begin position="1"/>
        <end position="419"/>
    </location>
</feature>